<sequence length="144" mass="15103">MRLNTLSPAEGAKHSAKRLGRGIGSGLGKTGGRGHKGQKSRTGSGVRRGFEGGQMPLYRRLPKFGFTSMKSAVTAEVRLNELTKVEGNVVTLETLKAANILTKDIQFAKVILAGEVKSAVTVRGLRVTKGAKAAIEAAGGSIEE</sequence>
<gene>
    <name evidence="1" type="primary">rplO</name>
    <name type="ordered locus">NTHI0960</name>
</gene>
<feature type="chain" id="PRO_0000104731" description="Large ribosomal subunit protein uL15">
    <location>
        <begin position="1"/>
        <end position="144"/>
    </location>
</feature>
<feature type="region of interest" description="Disordered" evidence="2">
    <location>
        <begin position="1"/>
        <end position="52"/>
    </location>
</feature>
<feature type="compositionally biased region" description="Gly residues" evidence="2">
    <location>
        <begin position="21"/>
        <end position="31"/>
    </location>
</feature>
<keyword id="KW-0687">Ribonucleoprotein</keyword>
<keyword id="KW-0689">Ribosomal protein</keyword>
<keyword id="KW-0694">RNA-binding</keyword>
<keyword id="KW-0699">rRNA-binding</keyword>
<name>RL15_HAEI8</name>
<evidence type="ECO:0000255" key="1">
    <source>
        <dbReference type="HAMAP-Rule" id="MF_01341"/>
    </source>
</evidence>
<evidence type="ECO:0000256" key="2">
    <source>
        <dbReference type="SAM" id="MobiDB-lite"/>
    </source>
</evidence>
<evidence type="ECO:0000305" key="3"/>
<organism>
    <name type="scientific">Haemophilus influenzae (strain 86-028NP)</name>
    <dbReference type="NCBI Taxonomy" id="281310"/>
    <lineage>
        <taxon>Bacteria</taxon>
        <taxon>Pseudomonadati</taxon>
        <taxon>Pseudomonadota</taxon>
        <taxon>Gammaproteobacteria</taxon>
        <taxon>Pasteurellales</taxon>
        <taxon>Pasteurellaceae</taxon>
        <taxon>Haemophilus</taxon>
    </lineage>
</organism>
<proteinExistence type="inferred from homology"/>
<comment type="function">
    <text evidence="1">Binds to the 23S rRNA.</text>
</comment>
<comment type="subunit">
    <text evidence="1">Part of the 50S ribosomal subunit.</text>
</comment>
<comment type="similarity">
    <text evidence="1">Belongs to the universal ribosomal protein uL15 family.</text>
</comment>
<protein>
    <recommendedName>
        <fullName evidence="1">Large ribosomal subunit protein uL15</fullName>
    </recommendedName>
    <alternativeName>
        <fullName evidence="3">50S ribosomal protein L15</fullName>
    </alternativeName>
</protein>
<reference key="1">
    <citation type="journal article" date="2005" name="J. Bacteriol.">
        <title>Genomic sequence of an otitis media isolate of nontypeable Haemophilus influenzae: comparative study with H. influenzae serotype d, strain KW20.</title>
        <authorList>
            <person name="Harrison A."/>
            <person name="Dyer D.W."/>
            <person name="Gillaspy A."/>
            <person name="Ray W.C."/>
            <person name="Mungur R."/>
            <person name="Carson M.B."/>
            <person name="Zhong H."/>
            <person name="Gipson J."/>
            <person name="Gipson M."/>
            <person name="Johnson L.S."/>
            <person name="Lewis L."/>
            <person name="Bakaletz L.O."/>
            <person name="Munson R.S. Jr."/>
        </authorList>
    </citation>
    <scope>NUCLEOTIDE SEQUENCE [LARGE SCALE GENOMIC DNA]</scope>
    <source>
        <strain>86-028NP</strain>
    </source>
</reference>
<dbReference type="EMBL" id="CP000057">
    <property type="protein sequence ID" value="AAX87845.1"/>
    <property type="molecule type" value="Genomic_DNA"/>
</dbReference>
<dbReference type="RefSeq" id="WP_011272219.1">
    <property type="nucleotide sequence ID" value="NC_007146.2"/>
</dbReference>
<dbReference type="SMR" id="Q4QMA2"/>
<dbReference type="GeneID" id="93219837"/>
<dbReference type="KEGG" id="hit:NTHI0960"/>
<dbReference type="HOGENOM" id="CLU_055188_4_2_6"/>
<dbReference type="Proteomes" id="UP000002525">
    <property type="component" value="Chromosome"/>
</dbReference>
<dbReference type="GO" id="GO:0022625">
    <property type="term" value="C:cytosolic large ribosomal subunit"/>
    <property type="evidence" value="ECO:0007669"/>
    <property type="project" value="TreeGrafter"/>
</dbReference>
<dbReference type="GO" id="GO:0019843">
    <property type="term" value="F:rRNA binding"/>
    <property type="evidence" value="ECO:0007669"/>
    <property type="project" value="UniProtKB-UniRule"/>
</dbReference>
<dbReference type="GO" id="GO:0003735">
    <property type="term" value="F:structural constituent of ribosome"/>
    <property type="evidence" value="ECO:0007669"/>
    <property type="project" value="InterPro"/>
</dbReference>
<dbReference type="GO" id="GO:0006412">
    <property type="term" value="P:translation"/>
    <property type="evidence" value="ECO:0007669"/>
    <property type="project" value="UniProtKB-UniRule"/>
</dbReference>
<dbReference type="FunFam" id="3.100.10.10:FF:000003">
    <property type="entry name" value="50S ribosomal protein L15"/>
    <property type="match status" value="1"/>
</dbReference>
<dbReference type="Gene3D" id="3.100.10.10">
    <property type="match status" value="1"/>
</dbReference>
<dbReference type="HAMAP" id="MF_01341">
    <property type="entry name" value="Ribosomal_uL15"/>
    <property type="match status" value="1"/>
</dbReference>
<dbReference type="InterPro" id="IPR030878">
    <property type="entry name" value="Ribosomal_uL15"/>
</dbReference>
<dbReference type="InterPro" id="IPR021131">
    <property type="entry name" value="Ribosomal_uL15/eL18"/>
</dbReference>
<dbReference type="InterPro" id="IPR036227">
    <property type="entry name" value="Ribosomal_uL15/eL18_sf"/>
</dbReference>
<dbReference type="InterPro" id="IPR005749">
    <property type="entry name" value="Ribosomal_uL15_bac-type"/>
</dbReference>
<dbReference type="InterPro" id="IPR001196">
    <property type="entry name" value="Ribosomal_uL15_CS"/>
</dbReference>
<dbReference type="NCBIfam" id="TIGR01071">
    <property type="entry name" value="rplO_bact"/>
    <property type="match status" value="1"/>
</dbReference>
<dbReference type="PANTHER" id="PTHR12934">
    <property type="entry name" value="50S RIBOSOMAL PROTEIN L15"/>
    <property type="match status" value="1"/>
</dbReference>
<dbReference type="PANTHER" id="PTHR12934:SF11">
    <property type="entry name" value="LARGE RIBOSOMAL SUBUNIT PROTEIN UL15M"/>
    <property type="match status" value="1"/>
</dbReference>
<dbReference type="Pfam" id="PF00828">
    <property type="entry name" value="Ribosomal_L27A"/>
    <property type="match status" value="1"/>
</dbReference>
<dbReference type="SUPFAM" id="SSF52080">
    <property type="entry name" value="Ribosomal proteins L15p and L18e"/>
    <property type="match status" value="1"/>
</dbReference>
<dbReference type="PROSITE" id="PS00475">
    <property type="entry name" value="RIBOSOMAL_L15"/>
    <property type="match status" value="1"/>
</dbReference>
<accession>Q4QMA2</accession>